<proteinExistence type="inferred from homology"/>
<feature type="chain" id="PRO_0000117222" description="tRNA uridine 5-carboxymethylaminomethyl modification enzyme MnmG">
    <location>
        <begin position="1"/>
        <end position="629"/>
    </location>
</feature>
<feature type="binding site" evidence="1">
    <location>
        <begin position="14"/>
        <end position="19"/>
    </location>
    <ligand>
        <name>FAD</name>
        <dbReference type="ChEBI" id="CHEBI:57692"/>
    </ligand>
</feature>
<feature type="binding site" evidence="1">
    <location>
        <begin position="274"/>
        <end position="288"/>
    </location>
    <ligand>
        <name>NAD(+)</name>
        <dbReference type="ChEBI" id="CHEBI:57540"/>
    </ligand>
</feature>
<reference key="1">
    <citation type="journal article" date="2003" name="J. Bacteriol.">
        <title>Comparative analyses of the complete genome sequences of Pierce's disease and citrus variegated chlorosis strains of Xylella fastidiosa.</title>
        <authorList>
            <person name="Van Sluys M.A."/>
            <person name="de Oliveira M.C."/>
            <person name="Monteiro-Vitorello C.B."/>
            <person name="Miyaki C.Y."/>
            <person name="Furlan L.R."/>
            <person name="Camargo L.E.A."/>
            <person name="da Silva A.C.R."/>
            <person name="Moon D.H."/>
            <person name="Takita M.A."/>
            <person name="Lemos E.G.M."/>
            <person name="Machado M.A."/>
            <person name="Ferro M.I.T."/>
            <person name="da Silva F.R."/>
            <person name="Goldman M.H.S."/>
            <person name="Goldman G.H."/>
            <person name="Lemos M.V.F."/>
            <person name="El-Dorry H."/>
            <person name="Tsai S.M."/>
            <person name="Carrer H."/>
            <person name="Carraro D.M."/>
            <person name="de Oliveira R.C."/>
            <person name="Nunes L.R."/>
            <person name="Siqueira W.J."/>
            <person name="Coutinho L.L."/>
            <person name="Kimura E.T."/>
            <person name="Ferro E.S."/>
            <person name="Harakava R."/>
            <person name="Kuramae E.E."/>
            <person name="Marino C.L."/>
            <person name="Giglioti E."/>
            <person name="Abreu I.L."/>
            <person name="Alves L.M.C."/>
            <person name="do Amaral A.M."/>
            <person name="Baia G.S."/>
            <person name="Blanco S.R."/>
            <person name="Brito M.S."/>
            <person name="Cannavan F.S."/>
            <person name="Celestino A.V."/>
            <person name="da Cunha A.F."/>
            <person name="Fenille R.C."/>
            <person name="Ferro J.A."/>
            <person name="Formighieri E.F."/>
            <person name="Kishi L.T."/>
            <person name="Leoni S.G."/>
            <person name="Oliveira A.R."/>
            <person name="Rosa V.E. Jr."/>
            <person name="Sassaki F.T."/>
            <person name="Sena J.A.D."/>
            <person name="de Souza A.A."/>
            <person name="Truffi D."/>
            <person name="Tsukumo F."/>
            <person name="Yanai G.M."/>
            <person name="Zaros L.G."/>
            <person name="Civerolo E.L."/>
            <person name="Simpson A.J.G."/>
            <person name="Almeida N.F. Jr."/>
            <person name="Setubal J.C."/>
            <person name="Kitajima J.P."/>
        </authorList>
    </citation>
    <scope>NUCLEOTIDE SEQUENCE [LARGE SCALE GENOMIC DNA]</scope>
    <source>
        <strain>Temecula1 / ATCC 700964</strain>
    </source>
</reference>
<dbReference type="EMBL" id="AE009442">
    <property type="protein sequence ID" value="AAO28641.1"/>
    <property type="molecule type" value="Genomic_DNA"/>
</dbReference>
<dbReference type="RefSeq" id="WP_011097778.1">
    <property type="nucleotide sequence ID" value="NC_004556.1"/>
</dbReference>
<dbReference type="SMR" id="Q87DB3"/>
<dbReference type="GeneID" id="93904558"/>
<dbReference type="KEGG" id="xft:PD_0773"/>
<dbReference type="HOGENOM" id="CLU_007831_2_2_6"/>
<dbReference type="Proteomes" id="UP000002516">
    <property type="component" value="Chromosome"/>
</dbReference>
<dbReference type="GO" id="GO:0005829">
    <property type="term" value="C:cytosol"/>
    <property type="evidence" value="ECO:0007669"/>
    <property type="project" value="TreeGrafter"/>
</dbReference>
<dbReference type="GO" id="GO:0050660">
    <property type="term" value="F:flavin adenine dinucleotide binding"/>
    <property type="evidence" value="ECO:0007669"/>
    <property type="project" value="UniProtKB-UniRule"/>
</dbReference>
<dbReference type="GO" id="GO:0030488">
    <property type="term" value="P:tRNA methylation"/>
    <property type="evidence" value="ECO:0007669"/>
    <property type="project" value="TreeGrafter"/>
</dbReference>
<dbReference type="GO" id="GO:0002098">
    <property type="term" value="P:tRNA wobble uridine modification"/>
    <property type="evidence" value="ECO:0007669"/>
    <property type="project" value="InterPro"/>
</dbReference>
<dbReference type="FunFam" id="1.10.10.1800:FF:000001">
    <property type="entry name" value="tRNA uridine 5-carboxymethylaminomethyl modification enzyme MnmG"/>
    <property type="match status" value="1"/>
</dbReference>
<dbReference type="FunFam" id="1.10.150.570:FF:000001">
    <property type="entry name" value="tRNA uridine 5-carboxymethylaminomethyl modification enzyme MnmG"/>
    <property type="match status" value="1"/>
</dbReference>
<dbReference type="FunFam" id="3.50.50.60:FF:000002">
    <property type="entry name" value="tRNA uridine 5-carboxymethylaminomethyl modification enzyme MnmG"/>
    <property type="match status" value="1"/>
</dbReference>
<dbReference type="FunFam" id="3.50.50.60:FF:000010">
    <property type="entry name" value="tRNA uridine 5-carboxymethylaminomethyl modification enzyme MnmG"/>
    <property type="match status" value="1"/>
</dbReference>
<dbReference type="Gene3D" id="3.50.50.60">
    <property type="entry name" value="FAD/NAD(P)-binding domain"/>
    <property type="match status" value="2"/>
</dbReference>
<dbReference type="Gene3D" id="1.10.150.570">
    <property type="entry name" value="GidA associated domain, C-terminal subdomain"/>
    <property type="match status" value="1"/>
</dbReference>
<dbReference type="Gene3D" id="1.10.10.1800">
    <property type="entry name" value="tRNA uridine 5-carboxymethylaminomethyl modification enzyme MnmG/GidA"/>
    <property type="match status" value="1"/>
</dbReference>
<dbReference type="HAMAP" id="MF_00129">
    <property type="entry name" value="MnmG_GidA"/>
    <property type="match status" value="1"/>
</dbReference>
<dbReference type="InterPro" id="IPR036188">
    <property type="entry name" value="FAD/NAD-bd_sf"/>
</dbReference>
<dbReference type="InterPro" id="IPR049312">
    <property type="entry name" value="GIDA_C_N"/>
</dbReference>
<dbReference type="InterPro" id="IPR004416">
    <property type="entry name" value="MnmG"/>
</dbReference>
<dbReference type="InterPro" id="IPR002218">
    <property type="entry name" value="MnmG-rel"/>
</dbReference>
<dbReference type="InterPro" id="IPR020595">
    <property type="entry name" value="MnmG-rel_CS"/>
</dbReference>
<dbReference type="InterPro" id="IPR026904">
    <property type="entry name" value="MnmG_C"/>
</dbReference>
<dbReference type="InterPro" id="IPR047001">
    <property type="entry name" value="MnmG_C_subdom"/>
</dbReference>
<dbReference type="InterPro" id="IPR044920">
    <property type="entry name" value="MnmG_C_subdom_sf"/>
</dbReference>
<dbReference type="InterPro" id="IPR040131">
    <property type="entry name" value="MnmG_N"/>
</dbReference>
<dbReference type="NCBIfam" id="TIGR00136">
    <property type="entry name" value="mnmG_gidA"/>
    <property type="match status" value="1"/>
</dbReference>
<dbReference type="PANTHER" id="PTHR11806">
    <property type="entry name" value="GLUCOSE INHIBITED DIVISION PROTEIN A"/>
    <property type="match status" value="1"/>
</dbReference>
<dbReference type="PANTHER" id="PTHR11806:SF0">
    <property type="entry name" value="PROTEIN MTO1 HOMOLOG, MITOCHONDRIAL"/>
    <property type="match status" value="1"/>
</dbReference>
<dbReference type="Pfam" id="PF01134">
    <property type="entry name" value="GIDA"/>
    <property type="match status" value="1"/>
</dbReference>
<dbReference type="Pfam" id="PF21680">
    <property type="entry name" value="GIDA_C_1st"/>
    <property type="match status" value="1"/>
</dbReference>
<dbReference type="Pfam" id="PF13932">
    <property type="entry name" value="SAM_GIDA_C"/>
    <property type="match status" value="1"/>
</dbReference>
<dbReference type="SMART" id="SM01228">
    <property type="entry name" value="GIDA_assoc_3"/>
    <property type="match status" value="1"/>
</dbReference>
<dbReference type="SUPFAM" id="SSF51905">
    <property type="entry name" value="FAD/NAD(P)-binding domain"/>
    <property type="match status" value="1"/>
</dbReference>
<dbReference type="PROSITE" id="PS01280">
    <property type="entry name" value="GIDA_1"/>
    <property type="match status" value="1"/>
</dbReference>
<dbReference type="PROSITE" id="PS01281">
    <property type="entry name" value="GIDA_2"/>
    <property type="match status" value="1"/>
</dbReference>
<evidence type="ECO:0000255" key="1">
    <source>
        <dbReference type="HAMAP-Rule" id="MF_00129"/>
    </source>
</evidence>
<protein>
    <recommendedName>
        <fullName evidence="1">tRNA uridine 5-carboxymethylaminomethyl modification enzyme MnmG</fullName>
    </recommendedName>
    <alternativeName>
        <fullName evidence="1">Glucose-inhibited division protein A</fullName>
    </alternativeName>
</protein>
<organism>
    <name type="scientific">Xylella fastidiosa (strain Temecula1 / ATCC 700964)</name>
    <dbReference type="NCBI Taxonomy" id="183190"/>
    <lineage>
        <taxon>Bacteria</taxon>
        <taxon>Pseudomonadati</taxon>
        <taxon>Pseudomonadota</taxon>
        <taxon>Gammaproteobacteria</taxon>
        <taxon>Lysobacterales</taxon>
        <taxon>Lysobacteraceae</taxon>
        <taxon>Xylella</taxon>
    </lineage>
</organism>
<name>MNMG_XYLFT</name>
<keyword id="KW-0963">Cytoplasm</keyword>
<keyword id="KW-0274">FAD</keyword>
<keyword id="KW-0285">Flavoprotein</keyword>
<keyword id="KW-0520">NAD</keyword>
<keyword id="KW-1185">Reference proteome</keyword>
<keyword id="KW-0819">tRNA processing</keyword>
<accession>Q87DB3</accession>
<comment type="function">
    <text evidence="1">NAD-binding protein involved in the addition of a carboxymethylaminomethyl (cmnm) group at the wobble position (U34) of certain tRNAs, forming tRNA-cmnm(5)s(2)U34.</text>
</comment>
<comment type="cofactor">
    <cofactor evidence="1">
        <name>FAD</name>
        <dbReference type="ChEBI" id="CHEBI:57692"/>
    </cofactor>
</comment>
<comment type="subunit">
    <text evidence="1">Homodimer. Heterotetramer of two MnmE and two MnmG subunits.</text>
</comment>
<comment type="subcellular location">
    <subcellularLocation>
        <location evidence="1">Cytoplasm</location>
    </subcellularLocation>
</comment>
<comment type="similarity">
    <text evidence="1">Belongs to the MnmG family.</text>
</comment>
<gene>
    <name evidence="1" type="primary">mnmG</name>
    <name evidence="1" type="synonym">gidA</name>
    <name type="ordered locus">PD_0773</name>
</gene>
<sequence>MTDSFYRYDVIVIGAGHAGSEAALAAARTGAHTLLLTHNIETIGAMSCNPAIGGIGKGHLVKEIDALGGAMAHAADAAGIQWRTLNASKGPAVRATRCQADRSLYRAAIRQMIEGQARLNIFQAEVDDLLFEGDTVCGAITHTGLHFKAPAVVLTAGTFLAGKIHIGPTQYAAGRMGDPPATMLAARLRERLLTVARLKTGTPPRIDGRTLNYTAMQEQPGDAPRPTMSFIGNSASHPPQVSCWITQTTERTHEIIRAALHRSPLYSGQIEGTGPRYCPSIEDKVVRFAEKNSHQIFVEPEGLNVIDIYPNGISTSLPFDVQLELVRSIRGFEQAHITRPGYAIEYDFFDPRGLKASLETKAIAGLFFAGQINGTTGYEEAAAQGLLAGLNAARHVRGLSSWTPRRDQAYLGVLVDDLITHGTNEPYRMFTSRAEYRLQLREDNADARLTAIGRDLGLVDDARWAHFNAKQEAVARECGRLSALWATPGNALGREVKETLGVTLSRETNIIDLMKRPELDYAALMRVPSLGPGVDDAQVAEQVEISVKYAGYLNRQSEEITRQQRHEATAIPLEFDYAAVRGLSTEVLQKLQHIQPQTVGQAQRIPGMTPAAISLLLVHLERMRRNRVA</sequence>